<organism>
    <name type="scientific">Mycolicibacterium smegmatis (strain ATCC 700084 / mc(2)155)</name>
    <name type="common">Mycobacterium smegmatis</name>
    <dbReference type="NCBI Taxonomy" id="246196"/>
    <lineage>
        <taxon>Bacteria</taxon>
        <taxon>Bacillati</taxon>
        <taxon>Actinomycetota</taxon>
        <taxon>Actinomycetes</taxon>
        <taxon>Mycobacteriales</taxon>
        <taxon>Mycobacteriaceae</taxon>
        <taxon>Mycolicibacterium</taxon>
    </lineage>
</organism>
<reference key="1">
    <citation type="submission" date="2006-10" db="EMBL/GenBank/DDBJ databases">
        <authorList>
            <person name="Fleischmann R.D."/>
            <person name="Dodson R.J."/>
            <person name="Haft D.H."/>
            <person name="Merkel J.S."/>
            <person name="Nelson W.C."/>
            <person name="Fraser C.M."/>
        </authorList>
    </citation>
    <scope>NUCLEOTIDE SEQUENCE [LARGE SCALE GENOMIC DNA]</scope>
    <source>
        <strain>ATCC 700084 / mc(2)155</strain>
    </source>
</reference>
<reference key="2">
    <citation type="journal article" date="2007" name="Genome Biol.">
        <title>Interrupted coding sequences in Mycobacterium smegmatis: authentic mutations or sequencing errors?</title>
        <authorList>
            <person name="Deshayes C."/>
            <person name="Perrodou E."/>
            <person name="Gallien S."/>
            <person name="Euphrasie D."/>
            <person name="Schaeffer C."/>
            <person name="Van-Dorsselaer A."/>
            <person name="Poch O."/>
            <person name="Lecompte O."/>
            <person name="Reyrat J.-M."/>
        </authorList>
    </citation>
    <scope>NUCLEOTIDE SEQUENCE [LARGE SCALE GENOMIC DNA]</scope>
    <source>
        <strain>ATCC 700084 / mc(2)155</strain>
    </source>
</reference>
<reference key="3">
    <citation type="journal article" date="2009" name="Genome Res.">
        <title>Ortho-proteogenomics: multiple proteomes investigation through orthology and a new MS-based protocol.</title>
        <authorList>
            <person name="Gallien S."/>
            <person name="Perrodou E."/>
            <person name="Carapito C."/>
            <person name="Deshayes C."/>
            <person name="Reyrat J.-M."/>
            <person name="Van Dorsselaer A."/>
            <person name="Poch O."/>
            <person name="Schaeffer C."/>
            <person name="Lecompte O."/>
        </authorList>
    </citation>
    <scope>NUCLEOTIDE SEQUENCE [LARGE SCALE GENOMIC DNA]</scope>
    <source>
        <strain>ATCC 700084 / mc(2)155</strain>
    </source>
</reference>
<proteinExistence type="inferred from homology"/>
<name>PDXH_MYCS2</name>
<gene>
    <name evidence="1" type="primary">pdxH</name>
    <name type="ordered locus">MSMEG_5675</name>
    <name type="ordered locus">MSMEI_5525</name>
</gene>
<accession>A0R420</accession>
<accession>I7FKZ6</accession>
<protein>
    <recommendedName>
        <fullName evidence="1">Pyridoxine/pyridoxamine 5'-phosphate oxidase</fullName>
        <ecNumber evidence="1">1.4.3.5</ecNumber>
    </recommendedName>
    <alternativeName>
        <fullName evidence="1">PNP/PMP oxidase</fullName>
        <shortName evidence="1">PNPOx</shortName>
    </alternativeName>
    <alternativeName>
        <fullName evidence="1">Pyridoxal 5'-phosphate synthase</fullName>
    </alternativeName>
</protein>
<dbReference type="EC" id="1.4.3.5" evidence="1"/>
<dbReference type="EMBL" id="CP000480">
    <property type="protein sequence ID" value="ABK69700.1"/>
    <property type="molecule type" value="Genomic_DNA"/>
</dbReference>
<dbReference type="EMBL" id="CP001663">
    <property type="protein sequence ID" value="AFP41965.1"/>
    <property type="molecule type" value="Genomic_DNA"/>
</dbReference>
<dbReference type="RefSeq" id="WP_011730702.1">
    <property type="nucleotide sequence ID" value="NZ_SIJM01000007.1"/>
</dbReference>
<dbReference type="RefSeq" id="YP_889908.1">
    <property type="nucleotide sequence ID" value="NC_008596.1"/>
</dbReference>
<dbReference type="SMR" id="A0R420"/>
<dbReference type="STRING" id="246196.MSMEG_5675"/>
<dbReference type="PaxDb" id="246196-MSMEI_5525"/>
<dbReference type="GeneID" id="93460318"/>
<dbReference type="KEGG" id="msb:LJ00_28060"/>
<dbReference type="KEGG" id="msg:MSMEI_5525"/>
<dbReference type="KEGG" id="msm:MSMEG_5675"/>
<dbReference type="PATRIC" id="fig|246196.19.peg.5530"/>
<dbReference type="eggNOG" id="COG0259">
    <property type="taxonomic scope" value="Bacteria"/>
</dbReference>
<dbReference type="OrthoDB" id="9780392at2"/>
<dbReference type="BRENDA" id="1.4.3.5">
    <property type="organism ID" value="3512"/>
</dbReference>
<dbReference type="UniPathway" id="UPA01068">
    <property type="reaction ID" value="UER00304"/>
</dbReference>
<dbReference type="UniPathway" id="UPA01068">
    <property type="reaction ID" value="UER00305"/>
</dbReference>
<dbReference type="Proteomes" id="UP000000757">
    <property type="component" value="Chromosome"/>
</dbReference>
<dbReference type="Proteomes" id="UP000006158">
    <property type="component" value="Chromosome"/>
</dbReference>
<dbReference type="GO" id="GO:0010181">
    <property type="term" value="F:FMN binding"/>
    <property type="evidence" value="ECO:0007669"/>
    <property type="project" value="UniProtKB-UniRule"/>
</dbReference>
<dbReference type="GO" id="GO:0004733">
    <property type="term" value="F:pyridoxamine phosphate oxidase activity"/>
    <property type="evidence" value="ECO:0007669"/>
    <property type="project" value="UniProtKB-UniRule"/>
</dbReference>
<dbReference type="GO" id="GO:0008615">
    <property type="term" value="P:pyridoxine biosynthetic process"/>
    <property type="evidence" value="ECO:0007669"/>
    <property type="project" value="UniProtKB-KW"/>
</dbReference>
<dbReference type="Gene3D" id="2.30.110.10">
    <property type="entry name" value="Electron Transport, Fmn-binding Protein, Chain A"/>
    <property type="match status" value="1"/>
</dbReference>
<dbReference type="HAMAP" id="MF_01629">
    <property type="entry name" value="PdxH"/>
    <property type="match status" value="1"/>
</dbReference>
<dbReference type="InterPro" id="IPR000659">
    <property type="entry name" value="Pyridox_Oxase"/>
</dbReference>
<dbReference type="InterPro" id="IPR019740">
    <property type="entry name" value="Pyridox_Oxase_CS"/>
</dbReference>
<dbReference type="InterPro" id="IPR011576">
    <property type="entry name" value="Pyridox_Oxase_N"/>
</dbReference>
<dbReference type="InterPro" id="IPR019576">
    <property type="entry name" value="Pyridoxamine_oxidase_dimer_C"/>
</dbReference>
<dbReference type="InterPro" id="IPR012349">
    <property type="entry name" value="Split_barrel_FMN-bd"/>
</dbReference>
<dbReference type="NCBIfam" id="TIGR00558">
    <property type="entry name" value="pdxH"/>
    <property type="match status" value="1"/>
</dbReference>
<dbReference type="NCBIfam" id="NF004231">
    <property type="entry name" value="PRK05679.1"/>
    <property type="match status" value="1"/>
</dbReference>
<dbReference type="PANTHER" id="PTHR10851:SF0">
    <property type="entry name" value="PYRIDOXINE-5'-PHOSPHATE OXIDASE"/>
    <property type="match status" value="1"/>
</dbReference>
<dbReference type="PANTHER" id="PTHR10851">
    <property type="entry name" value="PYRIDOXINE-5-PHOSPHATE OXIDASE"/>
    <property type="match status" value="1"/>
</dbReference>
<dbReference type="Pfam" id="PF10590">
    <property type="entry name" value="PNP_phzG_C"/>
    <property type="match status" value="1"/>
</dbReference>
<dbReference type="Pfam" id="PF01243">
    <property type="entry name" value="PNPOx_N"/>
    <property type="match status" value="1"/>
</dbReference>
<dbReference type="SUPFAM" id="SSF50475">
    <property type="entry name" value="FMN-binding split barrel"/>
    <property type="match status" value="1"/>
</dbReference>
<dbReference type="PROSITE" id="PS01064">
    <property type="entry name" value="PYRIDOX_OXIDASE"/>
    <property type="match status" value="1"/>
</dbReference>
<evidence type="ECO:0000255" key="1">
    <source>
        <dbReference type="HAMAP-Rule" id="MF_01629"/>
    </source>
</evidence>
<feature type="chain" id="PRO_0000335792" description="Pyridoxine/pyridoxamine 5'-phosphate oxidase">
    <location>
        <begin position="1"/>
        <end position="230"/>
    </location>
</feature>
<feature type="binding site" evidence="1">
    <location>
        <begin position="21"/>
        <end position="24"/>
    </location>
    <ligand>
        <name>substrate</name>
    </ligand>
</feature>
<feature type="binding site" evidence="1">
    <location>
        <begin position="82"/>
        <end position="87"/>
    </location>
    <ligand>
        <name>FMN</name>
        <dbReference type="ChEBI" id="CHEBI:58210"/>
    </ligand>
</feature>
<feature type="binding site" evidence="1">
    <location>
        <position position="87"/>
    </location>
    <ligand>
        <name>substrate</name>
    </ligand>
</feature>
<feature type="binding site" evidence="1">
    <location>
        <begin position="97"/>
        <end position="98"/>
    </location>
    <ligand>
        <name>FMN</name>
        <dbReference type="ChEBI" id="CHEBI:58210"/>
    </ligand>
</feature>
<feature type="binding site" evidence="1">
    <location>
        <position position="104"/>
    </location>
    <ligand>
        <name>FMN</name>
        <dbReference type="ChEBI" id="CHEBI:58210"/>
    </ligand>
</feature>
<feature type="binding site" evidence="1">
    <location>
        <position position="126"/>
    </location>
    <ligand>
        <name>FMN</name>
        <dbReference type="ChEBI" id="CHEBI:58210"/>
    </ligand>
</feature>
<feature type="binding site" evidence="1">
    <location>
        <position position="144"/>
    </location>
    <ligand>
        <name>substrate</name>
    </ligand>
</feature>
<feature type="binding site" evidence="1">
    <location>
        <position position="148"/>
    </location>
    <ligand>
        <name>substrate</name>
    </ligand>
</feature>
<feature type="binding site" evidence="1">
    <location>
        <position position="152"/>
    </location>
    <ligand>
        <name>substrate</name>
    </ligand>
</feature>
<feature type="binding site" evidence="1">
    <location>
        <begin position="161"/>
        <end position="162"/>
    </location>
    <ligand>
        <name>FMN</name>
        <dbReference type="ChEBI" id="CHEBI:58210"/>
    </ligand>
</feature>
<feature type="binding site" evidence="1">
    <location>
        <position position="207"/>
    </location>
    <ligand>
        <name>FMN</name>
        <dbReference type="ChEBI" id="CHEBI:58210"/>
    </ligand>
</feature>
<feature type="binding site" evidence="1">
    <location>
        <begin position="213"/>
        <end position="215"/>
    </location>
    <ligand>
        <name>substrate</name>
    </ligand>
</feature>
<feature type="binding site" evidence="1">
    <location>
        <position position="217"/>
    </location>
    <ligand>
        <name>FMN</name>
        <dbReference type="ChEBI" id="CHEBI:58210"/>
    </ligand>
</feature>
<sequence>MGIPDDPAGSAPENFDLATMRVEYVEKDGCGDLDVDWLGDDPATGWLTLLQTWINDAWKAGLPDANAMVVGTVDADGRPVTRSVLCKSVDPDGITFYTNYDSAKGEHLAVNAYASATFPWYQLGRQVHVRGAVTKVSAEETAEYWSKRPRGSQLGAWASQQSRPIASRAALLEQLAEVTERFADLDEVPVPPNWGGYRIAPEVVEFWQGRENRVHNRIRVTGGRVERLQP</sequence>
<comment type="function">
    <text evidence="1">Catalyzes the oxidation of either pyridoxine 5'-phosphate (PNP) or pyridoxamine 5'-phosphate (PMP) into pyridoxal 5'-phosphate (PLP).</text>
</comment>
<comment type="catalytic activity">
    <reaction evidence="1">
        <text>pyridoxamine 5'-phosphate + O2 + H2O = pyridoxal 5'-phosphate + H2O2 + NH4(+)</text>
        <dbReference type="Rhea" id="RHEA:15817"/>
        <dbReference type="ChEBI" id="CHEBI:15377"/>
        <dbReference type="ChEBI" id="CHEBI:15379"/>
        <dbReference type="ChEBI" id="CHEBI:16240"/>
        <dbReference type="ChEBI" id="CHEBI:28938"/>
        <dbReference type="ChEBI" id="CHEBI:58451"/>
        <dbReference type="ChEBI" id="CHEBI:597326"/>
        <dbReference type="EC" id="1.4.3.5"/>
    </reaction>
</comment>
<comment type="catalytic activity">
    <reaction evidence="1">
        <text>pyridoxine 5'-phosphate + O2 = pyridoxal 5'-phosphate + H2O2</text>
        <dbReference type="Rhea" id="RHEA:15149"/>
        <dbReference type="ChEBI" id="CHEBI:15379"/>
        <dbReference type="ChEBI" id="CHEBI:16240"/>
        <dbReference type="ChEBI" id="CHEBI:58589"/>
        <dbReference type="ChEBI" id="CHEBI:597326"/>
        <dbReference type="EC" id="1.4.3.5"/>
    </reaction>
</comment>
<comment type="cofactor">
    <cofactor evidence="1">
        <name>FMN</name>
        <dbReference type="ChEBI" id="CHEBI:58210"/>
    </cofactor>
    <text evidence="1">Binds 1 FMN per subunit.</text>
</comment>
<comment type="pathway">
    <text evidence="1">Cofactor metabolism; pyridoxal 5'-phosphate salvage; pyridoxal 5'-phosphate from pyridoxamine 5'-phosphate: step 1/1.</text>
</comment>
<comment type="pathway">
    <text evidence="1">Cofactor metabolism; pyridoxal 5'-phosphate salvage; pyridoxal 5'-phosphate from pyridoxine 5'-phosphate: step 1/1.</text>
</comment>
<comment type="subunit">
    <text evidence="1">Homodimer.</text>
</comment>
<comment type="similarity">
    <text evidence="1">Belongs to the pyridoxamine 5'-phosphate oxidase family.</text>
</comment>
<keyword id="KW-0285">Flavoprotein</keyword>
<keyword id="KW-0288">FMN</keyword>
<keyword id="KW-0560">Oxidoreductase</keyword>
<keyword id="KW-0664">Pyridoxine biosynthesis</keyword>
<keyword id="KW-1185">Reference proteome</keyword>